<reference key="1">
    <citation type="journal article" date="2005" name="Science">
        <title>Genome sequence of the PCE-dechlorinating bacterium Dehalococcoides ethenogenes.</title>
        <authorList>
            <person name="Seshadri R."/>
            <person name="Adrian L."/>
            <person name="Fouts D.E."/>
            <person name="Eisen J.A."/>
            <person name="Phillippy A.M."/>
            <person name="Methe B.A."/>
            <person name="Ward N.L."/>
            <person name="Nelson W.C."/>
            <person name="DeBoy R.T."/>
            <person name="Khouri H.M."/>
            <person name="Kolonay J.F."/>
            <person name="Dodson R.J."/>
            <person name="Daugherty S.C."/>
            <person name="Brinkac L.M."/>
            <person name="Sullivan S.A."/>
            <person name="Madupu R."/>
            <person name="Nelson K.E."/>
            <person name="Kang K.H."/>
            <person name="Impraim M."/>
            <person name="Tran K."/>
            <person name="Robinson J.M."/>
            <person name="Forberger H.A."/>
            <person name="Fraser C.M."/>
            <person name="Zinder S.H."/>
            <person name="Heidelberg J.F."/>
        </authorList>
    </citation>
    <scope>NUCLEOTIDE SEQUENCE [LARGE SCALE GENOMIC DNA]</scope>
    <source>
        <strain>ATCC BAA-2266 / KCTC 15142 / 195</strain>
    </source>
</reference>
<keyword id="KW-0227">DNA damage</keyword>
<keyword id="KW-0233">DNA recombination</keyword>
<keyword id="KW-0234">DNA repair</keyword>
<protein>
    <recommendedName>
        <fullName evidence="1">DNA repair protein RecO</fullName>
    </recommendedName>
    <alternativeName>
        <fullName evidence="1">Recombination protein O</fullName>
    </alternativeName>
</protein>
<evidence type="ECO:0000255" key="1">
    <source>
        <dbReference type="HAMAP-Rule" id="MF_00201"/>
    </source>
</evidence>
<gene>
    <name evidence="1" type="primary">recO</name>
    <name type="ordered locus">DET0580</name>
</gene>
<sequence>MTKPHDFKTRAIIVRKTKCGEADRILSLLTPDLGLIQGFAKSVRKTKSKLSGHLELFCYSEVSLARGKAIDTVTGSQTIQSFLNIRSSLQLSAMAFYVCELAFHFSPEESANPAIFQLLLSTLEELDNTTQAELCTKYFEIHLLEMSGYKPELRECANCHQKLLATTNYFSPESGGIICPDCRNTQTGIPISVNAVKVLRYIQENDIPNIYRLKINREILSELELAIRANIRFVLEKEPKALLWLDSLSRANL</sequence>
<proteinExistence type="inferred from homology"/>
<comment type="function">
    <text evidence="1">Involved in DNA repair and RecF pathway recombination.</text>
</comment>
<comment type="similarity">
    <text evidence="1">Belongs to the RecO family.</text>
</comment>
<feature type="chain" id="PRO_0000227040" description="DNA repair protein RecO">
    <location>
        <begin position="1"/>
        <end position="253"/>
    </location>
</feature>
<dbReference type="EMBL" id="CP000027">
    <property type="protein sequence ID" value="AAW40142.1"/>
    <property type="molecule type" value="Genomic_DNA"/>
</dbReference>
<dbReference type="RefSeq" id="WP_010936355.1">
    <property type="nucleotide sequence ID" value="NC_002936.3"/>
</dbReference>
<dbReference type="SMR" id="Q3Z8X7"/>
<dbReference type="FunCoup" id="Q3Z8X7">
    <property type="interactions" value="103"/>
</dbReference>
<dbReference type="STRING" id="243164.DET0580"/>
<dbReference type="GeneID" id="3230105"/>
<dbReference type="KEGG" id="det:DET0580"/>
<dbReference type="PATRIC" id="fig|243164.10.peg.557"/>
<dbReference type="eggNOG" id="COG1381">
    <property type="taxonomic scope" value="Bacteria"/>
</dbReference>
<dbReference type="HOGENOM" id="CLU_066632_1_0_0"/>
<dbReference type="InParanoid" id="Q3Z8X7"/>
<dbReference type="Proteomes" id="UP000008289">
    <property type="component" value="Chromosome"/>
</dbReference>
<dbReference type="GO" id="GO:0043590">
    <property type="term" value="C:bacterial nucleoid"/>
    <property type="evidence" value="ECO:0007669"/>
    <property type="project" value="TreeGrafter"/>
</dbReference>
<dbReference type="GO" id="GO:0006310">
    <property type="term" value="P:DNA recombination"/>
    <property type="evidence" value="ECO:0007669"/>
    <property type="project" value="UniProtKB-UniRule"/>
</dbReference>
<dbReference type="GO" id="GO:0006302">
    <property type="term" value="P:double-strand break repair"/>
    <property type="evidence" value="ECO:0007669"/>
    <property type="project" value="TreeGrafter"/>
</dbReference>
<dbReference type="Gene3D" id="2.40.50.140">
    <property type="entry name" value="Nucleic acid-binding proteins"/>
    <property type="match status" value="1"/>
</dbReference>
<dbReference type="Gene3D" id="1.20.1440.120">
    <property type="entry name" value="Recombination protein O, C-terminal domain"/>
    <property type="match status" value="1"/>
</dbReference>
<dbReference type="HAMAP" id="MF_00201">
    <property type="entry name" value="RecO"/>
    <property type="match status" value="1"/>
</dbReference>
<dbReference type="InterPro" id="IPR037278">
    <property type="entry name" value="ARFGAP/RecO"/>
</dbReference>
<dbReference type="InterPro" id="IPR022572">
    <property type="entry name" value="DNA_rep/recomb_RecO_N"/>
</dbReference>
<dbReference type="InterPro" id="IPR012340">
    <property type="entry name" value="NA-bd_OB-fold"/>
</dbReference>
<dbReference type="InterPro" id="IPR003717">
    <property type="entry name" value="RecO"/>
</dbReference>
<dbReference type="InterPro" id="IPR042242">
    <property type="entry name" value="RecO_C"/>
</dbReference>
<dbReference type="NCBIfam" id="TIGR00613">
    <property type="entry name" value="reco"/>
    <property type="match status" value="1"/>
</dbReference>
<dbReference type="PANTHER" id="PTHR33991">
    <property type="entry name" value="DNA REPAIR PROTEIN RECO"/>
    <property type="match status" value="1"/>
</dbReference>
<dbReference type="PANTHER" id="PTHR33991:SF1">
    <property type="entry name" value="DNA REPAIR PROTEIN RECO"/>
    <property type="match status" value="1"/>
</dbReference>
<dbReference type="Pfam" id="PF02565">
    <property type="entry name" value="RecO_C"/>
    <property type="match status" value="1"/>
</dbReference>
<dbReference type="Pfam" id="PF11967">
    <property type="entry name" value="RecO_N"/>
    <property type="match status" value="1"/>
</dbReference>
<dbReference type="SUPFAM" id="SSF57863">
    <property type="entry name" value="ArfGap/RecO-like zinc finger"/>
    <property type="match status" value="1"/>
</dbReference>
<dbReference type="SUPFAM" id="SSF50249">
    <property type="entry name" value="Nucleic acid-binding proteins"/>
    <property type="match status" value="1"/>
</dbReference>
<name>RECO_DEHM1</name>
<accession>Q3Z8X7</accession>
<organism>
    <name type="scientific">Dehalococcoides mccartyi (strain ATCC BAA-2266 / KCTC 15142 / 195)</name>
    <name type="common">Dehalococcoides ethenogenes (strain 195)</name>
    <dbReference type="NCBI Taxonomy" id="243164"/>
    <lineage>
        <taxon>Bacteria</taxon>
        <taxon>Bacillati</taxon>
        <taxon>Chloroflexota</taxon>
        <taxon>Dehalococcoidia</taxon>
        <taxon>Dehalococcoidales</taxon>
        <taxon>Dehalococcoidaceae</taxon>
        <taxon>Dehalococcoides</taxon>
    </lineage>
</organism>